<feature type="chain" id="PRO_1000058999" description="UPF0122 protein BPUM_1495">
    <location>
        <begin position="1"/>
        <end position="110"/>
    </location>
</feature>
<evidence type="ECO:0000255" key="1">
    <source>
        <dbReference type="HAMAP-Rule" id="MF_00245"/>
    </source>
</evidence>
<reference key="1">
    <citation type="journal article" date="2007" name="PLoS ONE">
        <title>Paradoxical DNA repair and peroxide resistance gene conservation in Bacillus pumilus SAFR-032.</title>
        <authorList>
            <person name="Gioia J."/>
            <person name="Yerrapragada S."/>
            <person name="Qin X."/>
            <person name="Jiang H."/>
            <person name="Igboeli O.C."/>
            <person name="Muzny D."/>
            <person name="Dugan-Rocha S."/>
            <person name="Ding Y."/>
            <person name="Hawes A."/>
            <person name="Liu W."/>
            <person name="Perez L."/>
            <person name="Kovar C."/>
            <person name="Dinh H."/>
            <person name="Lee S."/>
            <person name="Nazareth L."/>
            <person name="Blyth P."/>
            <person name="Holder M."/>
            <person name="Buhay C."/>
            <person name="Tirumalai M.R."/>
            <person name="Liu Y."/>
            <person name="Dasgupta I."/>
            <person name="Bokhetache L."/>
            <person name="Fujita M."/>
            <person name="Karouia F."/>
            <person name="Eswara Moorthy P."/>
            <person name="Siefert J."/>
            <person name="Uzman A."/>
            <person name="Buzumbo P."/>
            <person name="Verma A."/>
            <person name="Zwiya H."/>
            <person name="McWilliams B.D."/>
            <person name="Olowu A."/>
            <person name="Clinkenbeard K.D."/>
            <person name="Newcombe D."/>
            <person name="Golebiewski L."/>
            <person name="Petrosino J.F."/>
            <person name="Nicholson W.L."/>
            <person name="Fox G.E."/>
            <person name="Venkateswaran K."/>
            <person name="Highlander S.K."/>
            <person name="Weinstock G.M."/>
        </authorList>
    </citation>
    <scope>NUCLEOTIDE SEQUENCE [LARGE SCALE GENOMIC DNA]</scope>
    <source>
        <strain>SAFR-032</strain>
    </source>
</reference>
<sequence>MTLEKTTRMNYLFDFYQSLLTAKQKSYMSLYYLDDFSLGEIADEYEVSRQAVYDNIKRTEAMLEQYEEKLLLFKKFKERKELLKKMRELVADSAQTEEAEALIESLEKLD</sequence>
<comment type="function">
    <text evidence="1">Might take part in the signal recognition particle (SRP) pathway. This is inferred from the conservation of its genetic proximity to ftsY/ffh. May be a regulatory protein.</text>
</comment>
<comment type="similarity">
    <text evidence="1">Belongs to the UPF0122 family.</text>
</comment>
<accession>A8FD61</accession>
<proteinExistence type="inferred from homology"/>
<name>Y1495_BACP2</name>
<protein>
    <recommendedName>
        <fullName evidence="1">UPF0122 protein BPUM_1495</fullName>
    </recommendedName>
</protein>
<organism>
    <name type="scientific">Bacillus pumilus (strain SAFR-032)</name>
    <dbReference type="NCBI Taxonomy" id="315750"/>
    <lineage>
        <taxon>Bacteria</taxon>
        <taxon>Bacillati</taxon>
        <taxon>Bacillota</taxon>
        <taxon>Bacilli</taxon>
        <taxon>Bacillales</taxon>
        <taxon>Bacillaceae</taxon>
        <taxon>Bacillus</taxon>
    </lineage>
</organism>
<dbReference type="EMBL" id="CP000813">
    <property type="protein sequence ID" value="ABV62178.1"/>
    <property type="molecule type" value="Genomic_DNA"/>
</dbReference>
<dbReference type="RefSeq" id="WP_012009935.1">
    <property type="nucleotide sequence ID" value="NZ_VEIS01000003.1"/>
</dbReference>
<dbReference type="SMR" id="A8FD61"/>
<dbReference type="STRING" id="315750.BPUM_1495"/>
<dbReference type="KEGG" id="bpu:BPUM_1495"/>
<dbReference type="eggNOG" id="COG2739">
    <property type="taxonomic scope" value="Bacteria"/>
</dbReference>
<dbReference type="HOGENOM" id="CLU_129218_1_0_9"/>
<dbReference type="OrthoDB" id="6392at2"/>
<dbReference type="Proteomes" id="UP000001355">
    <property type="component" value="Chromosome"/>
</dbReference>
<dbReference type="Gene3D" id="1.10.10.10">
    <property type="entry name" value="Winged helix-like DNA-binding domain superfamily/Winged helix DNA-binding domain"/>
    <property type="match status" value="1"/>
</dbReference>
<dbReference type="HAMAP" id="MF_00245">
    <property type="entry name" value="UPF0122"/>
    <property type="match status" value="1"/>
</dbReference>
<dbReference type="InterPro" id="IPR013324">
    <property type="entry name" value="RNA_pol_sigma_r3/r4-like"/>
</dbReference>
<dbReference type="InterPro" id="IPR007394">
    <property type="entry name" value="UPF0122"/>
</dbReference>
<dbReference type="InterPro" id="IPR054831">
    <property type="entry name" value="UPF0122_fam_protein"/>
</dbReference>
<dbReference type="InterPro" id="IPR036388">
    <property type="entry name" value="WH-like_DNA-bd_sf"/>
</dbReference>
<dbReference type="NCBIfam" id="NF001068">
    <property type="entry name" value="PRK00118.1-4"/>
    <property type="match status" value="1"/>
</dbReference>
<dbReference type="NCBIfam" id="NF001070">
    <property type="entry name" value="PRK00118.1-6"/>
    <property type="match status" value="1"/>
</dbReference>
<dbReference type="NCBIfam" id="NF045758">
    <property type="entry name" value="YlxM"/>
    <property type="match status" value="1"/>
</dbReference>
<dbReference type="PANTHER" id="PTHR40083">
    <property type="entry name" value="UPF0122 PROTEIN CBO2450/CLC_2298"/>
    <property type="match status" value="1"/>
</dbReference>
<dbReference type="PANTHER" id="PTHR40083:SF1">
    <property type="entry name" value="UPF0122 PROTEIN YLXM"/>
    <property type="match status" value="1"/>
</dbReference>
<dbReference type="Pfam" id="PF04297">
    <property type="entry name" value="UPF0122"/>
    <property type="match status" value="1"/>
</dbReference>
<dbReference type="SUPFAM" id="SSF88659">
    <property type="entry name" value="Sigma3 and sigma4 domains of RNA polymerase sigma factors"/>
    <property type="match status" value="1"/>
</dbReference>
<gene>
    <name type="ordered locus">BPUM_1495</name>
</gene>